<feature type="chain" id="PRO_0000135886" description="Histidinol dehydrogenase">
    <location>
        <begin position="1"/>
        <end position="431"/>
    </location>
</feature>
<feature type="active site" description="Proton acceptor" evidence="1">
    <location>
        <position position="326"/>
    </location>
</feature>
<feature type="active site" description="Proton acceptor" evidence="1">
    <location>
        <position position="327"/>
    </location>
</feature>
<feature type="binding site" evidence="1">
    <location>
        <position position="127"/>
    </location>
    <ligand>
        <name>NAD(+)</name>
        <dbReference type="ChEBI" id="CHEBI:57540"/>
    </ligand>
</feature>
<feature type="binding site" evidence="1">
    <location>
        <position position="189"/>
    </location>
    <ligand>
        <name>NAD(+)</name>
        <dbReference type="ChEBI" id="CHEBI:57540"/>
    </ligand>
</feature>
<feature type="binding site" evidence="1">
    <location>
        <position position="212"/>
    </location>
    <ligand>
        <name>NAD(+)</name>
        <dbReference type="ChEBI" id="CHEBI:57540"/>
    </ligand>
</feature>
<feature type="binding site" evidence="1">
    <location>
        <position position="237"/>
    </location>
    <ligand>
        <name>substrate</name>
    </ligand>
</feature>
<feature type="binding site" evidence="1">
    <location>
        <position position="259"/>
    </location>
    <ligand>
        <name>substrate</name>
    </ligand>
</feature>
<feature type="binding site" evidence="1">
    <location>
        <position position="259"/>
    </location>
    <ligand>
        <name>Zn(2+)</name>
        <dbReference type="ChEBI" id="CHEBI:29105"/>
    </ligand>
</feature>
<feature type="binding site" evidence="1">
    <location>
        <position position="262"/>
    </location>
    <ligand>
        <name>substrate</name>
    </ligand>
</feature>
<feature type="binding site" evidence="1">
    <location>
        <position position="262"/>
    </location>
    <ligand>
        <name>Zn(2+)</name>
        <dbReference type="ChEBI" id="CHEBI:29105"/>
    </ligand>
</feature>
<feature type="binding site" evidence="1">
    <location>
        <position position="327"/>
    </location>
    <ligand>
        <name>substrate</name>
    </ligand>
</feature>
<feature type="binding site" evidence="1">
    <location>
        <position position="360"/>
    </location>
    <ligand>
        <name>substrate</name>
    </ligand>
</feature>
<feature type="binding site" evidence="1">
    <location>
        <position position="360"/>
    </location>
    <ligand>
        <name>Zn(2+)</name>
        <dbReference type="ChEBI" id="CHEBI:29105"/>
    </ligand>
</feature>
<feature type="binding site" evidence="1">
    <location>
        <position position="414"/>
    </location>
    <ligand>
        <name>substrate</name>
    </ligand>
</feature>
<feature type="binding site" evidence="1">
    <location>
        <position position="419"/>
    </location>
    <ligand>
        <name>substrate</name>
    </ligand>
</feature>
<feature type="binding site" evidence="1">
    <location>
        <position position="419"/>
    </location>
    <ligand>
        <name>Zn(2+)</name>
        <dbReference type="ChEBI" id="CHEBI:29105"/>
    </ligand>
</feature>
<reference key="1">
    <citation type="journal article" date="2003" name="J. Bacteriol.">
        <title>Comparative analyses of the complete genome sequences of Pierce's disease and citrus variegated chlorosis strains of Xylella fastidiosa.</title>
        <authorList>
            <person name="Van Sluys M.A."/>
            <person name="de Oliveira M.C."/>
            <person name="Monteiro-Vitorello C.B."/>
            <person name="Miyaki C.Y."/>
            <person name="Furlan L.R."/>
            <person name="Camargo L.E.A."/>
            <person name="da Silva A.C.R."/>
            <person name="Moon D.H."/>
            <person name="Takita M.A."/>
            <person name="Lemos E.G.M."/>
            <person name="Machado M.A."/>
            <person name="Ferro M.I.T."/>
            <person name="da Silva F.R."/>
            <person name="Goldman M.H.S."/>
            <person name="Goldman G.H."/>
            <person name="Lemos M.V.F."/>
            <person name="El-Dorry H."/>
            <person name="Tsai S.M."/>
            <person name="Carrer H."/>
            <person name="Carraro D.M."/>
            <person name="de Oliveira R.C."/>
            <person name="Nunes L.R."/>
            <person name="Siqueira W.J."/>
            <person name="Coutinho L.L."/>
            <person name="Kimura E.T."/>
            <person name="Ferro E.S."/>
            <person name="Harakava R."/>
            <person name="Kuramae E.E."/>
            <person name="Marino C.L."/>
            <person name="Giglioti E."/>
            <person name="Abreu I.L."/>
            <person name="Alves L.M.C."/>
            <person name="do Amaral A.M."/>
            <person name="Baia G.S."/>
            <person name="Blanco S.R."/>
            <person name="Brito M.S."/>
            <person name="Cannavan F.S."/>
            <person name="Celestino A.V."/>
            <person name="da Cunha A.F."/>
            <person name="Fenille R.C."/>
            <person name="Ferro J.A."/>
            <person name="Formighieri E.F."/>
            <person name="Kishi L.T."/>
            <person name="Leoni S.G."/>
            <person name="Oliveira A.R."/>
            <person name="Rosa V.E. Jr."/>
            <person name="Sassaki F.T."/>
            <person name="Sena J.A.D."/>
            <person name="de Souza A.A."/>
            <person name="Truffi D."/>
            <person name="Tsukumo F."/>
            <person name="Yanai G.M."/>
            <person name="Zaros L.G."/>
            <person name="Civerolo E.L."/>
            <person name="Simpson A.J.G."/>
            <person name="Almeida N.F. Jr."/>
            <person name="Setubal J.C."/>
            <person name="Kitajima J.P."/>
        </authorList>
    </citation>
    <scope>NUCLEOTIDE SEQUENCE [LARGE SCALE GENOMIC DNA]</scope>
    <source>
        <strain>Temecula1 / ATCC 700964</strain>
    </source>
</reference>
<organism>
    <name type="scientific">Xylella fastidiosa (strain Temecula1 / ATCC 700964)</name>
    <dbReference type="NCBI Taxonomy" id="183190"/>
    <lineage>
        <taxon>Bacteria</taxon>
        <taxon>Pseudomonadati</taxon>
        <taxon>Pseudomonadota</taxon>
        <taxon>Gammaproteobacteria</taxon>
        <taxon>Lysobacterales</taxon>
        <taxon>Lysobacteraceae</taxon>
        <taxon>Xylella</taxon>
    </lineage>
</organism>
<protein>
    <recommendedName>
        <fullName evidence="1">Histidinol dehydrogenase</fullName>
        <shortName evidence="1">HDH</shortName>
        <ecNumber evidence="1">1.1.1.23</ecNumber>
    </recommendedName>
</protein>
<sequence>MKIIDWNQLDTAAQAKTLTRPAQTIATQTREAVTALIEQVRRGGDTALRDITARFDGVDLATFEVTAAELAAAATAVAPELQHAMQTAAARIEAFHRAGMTNDYRVETAPGVVCERLVRPIARVGLYVPAGSAPLFSTALMLGVPARLAGCREVVLCTPPSKDGRANPAVLLAARLTGVTRVFTLGGAQAIAAMAYGTASVPTCDKVFGPGNSFVTEAKQQLAQAGVVAIDMPAGPSEVLVIADAAANPAFIAADLLSQAEHGPDSQVLLLSDSDALMTAVQNALALQLQQLSRAEIARQALAHSRFIKVATLETAFDISNRYAPEHLILALRQPRAWLHRVAAAGSVFLGDYTPEALGDYCSGTNHVLPTGGAARAYSGVSVSSFQNMISVQAASRSGIAEIGGCALTLARAEGLDAHANAVALRMGSAP</sequence>
<comment type="function">
    <text evidence="1">Catalyzes the sequential NAD-dependent oxidations of L-histidinol to L-histidinaldehyde and then to L-histidine.</text>
</comment>
<comment type="catalytic activity">
    <reaction evidence="1">
        <text>L-histidinol + 2 NAD(+) + H2O = L-histidine + 2 NADH + 3 H(+)</text>
        <dbReference type="Rhea" id="RHEA:20641"/>
        <dbReference type="ChEBI" id="CHEBI:15377"/>
        <dbReference type="ChEBI" id="CHEBI:15378"/>
        <dbReference type="ChEBI" id="CHEBI:57540"/>
        <dbReference type="ChEBI" id="CHEBI:57595"/>
        <dbReference type="ChEBI" id="CHEBI:57699"/>
        <dbReference type="ChEBI" id="CHEBI:57945"/>
        <dbReference type="EC" id="1.1.1.23"/>
    </reaction>
</comment>
<comment type="cofactor">
    <cofactor evidence="1">
        <name>Zn(2+)</name>
        <dbReference type="ChEBI" id="CHEBI:29105"/>
    </cofactor>
    <text evidence="1">Binds 1 zinc ion per subunit.</text>
</comment>
<comment type="pathway">
    <text evidence="1">Amino-acid biosynthesis; L-histidine biosynthesis; L-histidine from 5-phospho-alpha-D-ribose 1-diphosphate: step 9/9.</text>
</comment>
<comment type="similarity">
    <text evidence="1">Belongs to the histidinol dehydrogenase family.</text>
</comment>
<keyword id="KW-0028">Amino-acid biosynthesis</keyword>
<keyword id="KW-0368">Histidine biosynthesis</keyword>
<keyword id="KW-0479">Metal-binding</keyword>
<keyword id="KW-0520">NAD</keyword>
<keyword id="KW-0560">Oxidoreductase</keyword>
<keyword id="KW-1185">Reference proteome</keyword>
<keyword id="KW-0862">Zinc</keyword>
<gene>
    <name evidence="1" type="primary">hisD</name>
    <name type="ordered locus">PD_1267</name>
</gene>
<accession>Q87C29</accession>
<proteinExistence type="inferred from homology"/>
<name>HISX_XYLFT</name>
<evidence type="ECO:0000255" key="1">
    <source>
        <dbReference type="HAMAP-Rule" id="MF_01024"/>
    </source>
</evidence>
<dbReference type="EC" id="1.1.1.23" evidence="1"/>
<dbReference type="EMBL" id="AE009442">
    <property type="protein sequence ID" value="AAO29116.1"/>
    <property type="molecule type" value="Genomic_DNA"/>
</dbReference>
<dbReference type="RefSeq" id="WP_011098024.1">
    <property type="nucleotide sequence ID" value="NC_004556.1"/>
</dbReference>
<dbReference type="SMR" id="Q87C29"/>
<dbReference type="KEGG" id="xft:PD_1267"/>
<dbReference type="HOGENOM" id="CLU_006732_3_0_6"/>
<dbReference type="UniPathway" id="UPA00031">
    <property type="reaction ID" value="UER00014"/>
</dbReference>
<dbReference type="Proteomes" id="UP000002516">
    <property type="component" value="Chromosome"/>
</dbReference>
<dbReference type="GO" id="GO:0005829">
    <property type="term" value="C:cytosol"/>
    <property type="evidence" value="ECO:0007669"/>
    <property type="project" value="TreeGrafter"/>
</dbReference>
<dbReference type="GO" id="GO:0004399">
    <property type="term" value="F:histidinol dehydrogenase activity"/>
    <property type="evidence" value="ECO:0007669"/>
    <property type="project" value="UniProtKB-UniRule"/>
</dbReference>
<dbReference type="GO" id="GO:0051287">
    <property type="term" value="F:NAD binding"/>
    <property type="evidence" value="ECO:0007669"/>
    <property type="project" value="InterPro"/>
</dbReference>
<dbReference type="GO" id="GO:0008270">
    <property type="term" value="F:zinc ion binding"/>
    <property type="evidence" value="ECO:0007669"/>
    <property type="project" value="UniProtKB-UniRule"/>
</dbReference>
<dbReference type="GO" id="GO:0000105">
    <property type="term" value="P:L-histidine biosynthetic process"/>
    <property type="evidence" value="ECO:0007669"/>
    <property type="project" value="UniProtKB-UniRule"/>
</dbReference>
<dbReference type="CDD" id="cd06572">
    <property type="entry name" value="Histidinol_dh"/>
    <property type="match status" value="1"/>
</dbReference>
<dbReference type="FunFam" id="3.40.50.1980:FF:000001">
    <property type="entry name" value="Histidinol dehydrogenase"/>
    <property type="match status" value="1"/>
</dbReference>
<dbReference type="Gene3D" id="1.20.5.1300">
    <property type="match status" value="1"/>
</dbReference>
<dbReference type="Gene3D" id="3.40.50.1980">
    <property type="entry name" value="Nitrogenase molybdenum iron protein domain"/>
    <property type="match status" value="2"/>
</dbReference>
<dbReference type="HAMAP" id="MF_01024">
    <property type="entry name" value="HisD"/>
    <property type="match status" value="1"/>
</dbReference>
<dbReference type="InterPro" id="IPR016161">
    <property type="entry name" value="Ald_DH/histidinol_DH"/>
</dbReference>
<dbReference type="InterPro" id="IPR001692">
    <property type="entry name" value="Histidinol_DH_CS"/>
</dbReference>
<dbReference type="InterPro" id="IPR022695">
    <property type="entry name" value="Histidinol_DH_monofunct"/>
</dbReference>
<dbReference type="InterPro" id="IPR012131">
    <property type="entry name" value="Hstdl_DH"/>
</dbReference>
<dbReference type="NCBIfam" id="TIGR00069">
    <property type="entry name" value="hisD"/>
    <property type="match status" value="1"/>
</dbReference>
<dbReference type="PANTHER" id="PTHR21256:SF2">
    <property type="entry name" value="HISTIDINE BIOSYNTHESIS TRIFUNCTIONAL PROTEIN"/>
    <property type="match status" value="1"/>
</dbReference>
<dbReference type="PANTHER" id="PTHR21256">
    <property type="entry name" value="HISTIDINOL DEHYDROGENASE HDH"/>
    <property type="match status" value="1"/>
</dbReference>
<dbReference type="Pfam" id="PF00815">
    <property type="entry name" value="Histidinol_dh"/>
    <property type="match status" value="1"/>
</dbReference>
<dbReference type="PIRSF" id="PIRSF000099">
    <property type="entry name" value="Histidinol_dh"/>
    <property type="match status" value="1"/>
</dbReference>
<dbReference type="PRINTS" id="PR00083">
    <property type="entry name" value="HOLDHDRGNASE"/>
</dbReference>
<dbReference type="SUPFAM" id="SSF53720">
    <property type="entry name" value="ALDH-like"/>
    <property type="match status" value="1"/>
</dbReference>
<dbReference type="PROSITE" id="PS00611">
    <property type="entry name" value="HISOL_DEHYDROGENASE"/>
    <property type="match status" value="1"/>
</dbReference>